<organism>
    <name type="scientific">Homo sapiens</name>
    <name type="common">Human</name>
    <dbReference type="NCBI Taxonomy" id="9606"/>
    <lineage>
        <taxon>Eukaryota</taxon>
        <taxon>Metazoa</taxon>
        <taxon>Chordata</taxon>
        <taxon>Craniata</taxon>
        <taxon>Vertebrata</taxon>
        <taxon>Euteleostomi</taxon>
        <taxon>Mammalia</taxon>
        <taxon>Eutheria</taxon>
        <taxon>Euarchontoglires</taxon>
        <taxon>Primates</taxon>
        <taxon>Haplorrhini</taxon>
        <taxon>Catarrhini</taxon>
        <taxon>Hominidae</taxon>
        <taxon>Homo</taxon>
    </lineage>
</organism>
<feature type="signal peptide" evidence="1">
    <location>
        <begin position="1"/>
        <end position="20"/>
    </location>
</feature>
<feature type="propeptide" id="PRO_0000016529">
    <location>
        <begin position="21"/>
        <end position="34"/>
    </location>
</feature>
<feature type="chain" id="PRO_0000016530" description="Inter-alpha-trypsin inhibitor heavy chain H3">
    <location>
        <begin position="35"/>
        <end position="651"/>
    </location>
</feature>
<feature type="propeptide" id="PRO_0000016531">
    <location>
        <begin position="652"/>
        <end position="890"/>
    </location>
</feature>
<feature type="domain" description="VIT" evidence="3">
    <location>
        <begin position="29"/>
        <end position="158"/>
    </location>
</feature>
<feature type="domain" description="VWFA" evidence="2">
    <location>
        <begin position="284"/>
        <end position="467"/>
    </location>
</feature>
<feature type="modified residue" description="Aspartate 1-(chondroitin 4-sulfate)-ester">
    <location>
        <position position="651"/>
    </location>
</feature>
<feature type="glycosylation site" description="N-linked (GlcNAc...) asparagine" evidence="4">
    <location>
        <position position="91"/>
    </location>
</feature>
<feature type="glycosylation site" description="N-linked (GlcNAc...) asparagine" evidence="4">
    <location>
        <position position="580"/>
    </location>
</feature>
<feature type="splice variant" id="VSP_029842" description="In isoform 2." evidence="7 8">
    <original>MAFAWWPCLILALLSSLAASG</original>
    <variation>MVALSHLGSALQLGSLC</variation>
    <location>
        <begin position="1"/>
        <end position="21"/>
    </location>
</feature>
<feature type="sequence variant" id="VAR_049647" description="In dbSNP:rs3617." evidence="6">
    <original>Q</original>
    <variation>K</variation>
    <location>
        <position position="315"/>
    </location>
</feature>
<feature type="sequence variant" id="VAR_049648" description="In dbSNP:rs35271262.">
    <original>T</original>
    <variation>M</variation>
    <location>
        <position position="340"/>
    </location>
</feature>
<feature type="sequence variant" id="VAR_061275" description="In dbSNP:rs60805548.">
    <original>P</original>
    <variation>L</variation>
    <location>
        <position position="640"/>
    </location>
</feature>
<feature type="sequence variant" id="VAR_049649" description="In dbSNP:rs9883888.">
    <original>T</original>
    <variation>A</variation>
    <location>
        <position position="751"/>
    </location>
</feature>
<feature type="sequence variant" id="VAR_049650" description="In dbSNP:rs2710330.">
    <original>R</original>
    <variation>Q</variation>
    <location>
        <position position="825"/>
    </location>
</feature>
<feature type="sequence variant" id="VAR_049651" description="In dbSNP:rs2710329.">
    <original>A</original>
    <variation>V</variation>
    <location>
        <position position="858"/>
    </location>
</feature>
<feature type="sequence conflict" description="In Ref. 3; BAD97203/BAD96477." evidence="9" ref="3">
    <original>K</original>
    <variation>N</variation>
    <location>
        <position position="113"/>
    </location>
</feature>
<feature type="sequence conflict" description="In Ref. 8; CAA32821." evidence="9" ref="8">
    <original>R</original>
    <variation>K</variation>
    <location>
        <position position="348"/>
    </location>
</feature>
<feature type="sequence conflict" description="In Ref. 8; CAA32821." evidence="9" ref="8">
    <original>N</original>
    <variation>G</variation>
    <location>
        <position position="361"/>
    </location>
</feature>
<feature type="sequence conflict" description="In Ref. 2; CAC79611." evidence="9" ref="2">
    <original>F</original>
    <variation>L</variation>
    <location>
        <position position="515"/>
    </location>
</feature>
<feature type="sequence conflict" description="In Ref. 3; BAD97203/BAD96477." evidence="9" ref="3">
    <original>F</original>
    <variation>L</variation>
    <location>
        <position position="667"/>
    </location>
</feature>
<feature type="sequence conflict" description="In Ref. 1; CAA47439 and 8; CAA32821." evidence="9" ref="1 8">
    <original>A</original>
    <variation>R</variation>
    <location>
        <position position="716"/>
    </location>
</feature>
<feature type="sequence conflict" description="In Ref. 8; CAA32821." evidence="9" ref="8">
    <original>Q</original>
    <variation>H</variation>
    <location>
        <position position="851"/>
    </location>
</feature>
<dbReference type="EMBL" id="X67055">
    <property type="protein sequence ID" value="CAA47439.1"/>
    <property type="status" value="ALT_FRAME"/>
    <property type="molecule type" value="mRNA"/>
</dbReference>
<dbReference type="EMBL" id="X99854">
    <property type="protein sequence ID" value="CAC79611.1"/>
    <property type="molecule type" value="Genomic_DNA"/>
</dbReference>
<dbReference type="EMBL" id="AK222757">
    <property type="protein sequence ID" value="BAD96477.1"/>
    <property type="molecule type" value="mRNA"/>
</dbReference>
<dbReference type="EMBL" id="AK223483">
    <property type="protein sequence ID" value="BAD97203.1"/>
    <property type="molecule type" value="mRNA"/>
</dbReference>
<dbReference type="EMBL" id="AC006254">
    <property type="status" value="NOT_ANNOTATED_CDS"/>
    <property type="molecule type" value="Genomic_DNA"/>
</dbReference>
<dbReference type="EMBL" id="BC107604">
    <property type="protein sequence ID" value="AAI07605.1"/>
    <property type="molecule type" value="mRNA"/>
</dbReference>
<dbReference type="EMBL" id="BC107605">
    <property type="protein sequence ID" value="AAI07606.1"/>
    <property type="molecule type" value="mRNA"/>
</dbReference>
<dbReference type="EMBL" id="BC107814">
    <property type="protein sequence ID" value="AAI07815.1"/>
    <property type="molecule type" value="mRNA"/>
</dbReference>
<dbReference type="EMBL" id="X14690">
    <property type="protein sequence ID" value="CAA32821.1"/>
    <property type="status" value="ALT_FRAME"/>
    <property type="molecule type" value="mRNA"/>
</dbReference>
<dbReference type="CCDS" id="CCDS46845.1">
    <molecule id="Q06033-1"/>
</dbReference>
<dbReference type="PIR" id="S30350">
    <property type="entry name" value="S30350"/>
</dbReference>
<dbReference type="RefSeq" id="NP_002208.3">
    <molecule id="Q06033-1"/>
    <property type="nucleotide sequence ID" value="NM_002217.4"/>
</dbReference>
<dbReference type="SMR" id="Q06033"/>
<dbReference type="BioGRID" id="109905">
    <property type="interactions" value="42"/>
</dbReference>
<dbReference type="FunCoup" id="Q06033">
    <property type="interactions" value="111"/>
</dbReference>
<dbReference type="IntAct" id="Q06033">
    <property type="interactions" value="14"/>
</dbReference>
<dbReference type="MINT" id="Q06033"/>
<dbReference type="STRING" id="9606.ENSP00000415769"/>
<dbReference type="DrugBank" id="DB01593">
    <property type="generic name" value="Zinc"/>
</dbReference>
<dbReference type="DrugBank" id="DB14487">
    <property type="generic name" value="Zinc acetate"/>
</dbReference>
<dbReference type="DrugBank" id="DB14533">
    <property type="generic name" value="Zinc chloride"/>
</dbReference>
<dbReference type="DrugBank" id="DB14548">
    <property type="generic name" value="Zinc sulfate, unspecified form"/>
</dbReference>
<dbReference type="CarbonylDB" id="Q06033"/>
<dbReference type="GlyConnect" id="1421">
    <property type="glycosylation" value="10 N-Linked glycans (1 site)"/>
</dbReference>
<dbReference type="GlyCosmos" id="Q06033">
    <property type="glycosylation" value="2 sites, 10 glycans"/>
</dbReference>
<dbReference type="GlyGen" id="Q06033">
    <property type="glycosylation" value="3 sites, 22 N-linked glycans (2 sites), 1 O-linked glycan (1 site)"/>
</dbReference>
<dbReference type="iPTMnet" id="Q06033"/>
<dbReference type="PhosphoSitePlus" id="Q06033"/>
<dbReference type="BioMuta" id="ITIH3"/>
<dbReference type="DMDM" id="166203665"/>
<dbReference type="jPOST" id="Q06033"/>
<dbReference type="MassIVE" id="Q06033"/>
<dbReference type="PaxDb" id="9606-ENSP00000415769"/>
<dbReference type="PeptideAtlas" id="Q06033"/>
<dbReference type="ProteomicsDB" id="58409">
    <molecule id="Q06033-1"/>
</dbReference>
<dbReference type="ProteomicsDB" id="58410">
    <molecule id="Q06033-2"/>
</dbReference>
<dbReference type="Antibodypedia" id="7471">
    <property type="antibodies" value="106 antibodies from 23 providers"/>
</dbReference>
<dbReference type="DNASU" id="3699"/>
<dbReference type="Ensembl" id="ENST00000449956.3">
    <molecule id="Q06033-1"/>
    <property type="protein sequence ID" value="ENSP00000415769.2"/>
    <property type="gene ID" value="ENSG00000162267.14"/>
</dbReference>
<dbReference type="GeneID" id="3699"/>
<dbReference type="KEGG" id="hsa:3699"/>
<dbReference type="MANE-Select" id="ENST00000449956.3">
    <property type="protein sequence ID" value="ENSP00000415769.2"/>
    <property type="RefSeq nucleotide sequence ID" value="NM_002217.4"/>
    <property type="RefSeq protein sequence ID" value="NP_002208.3"/>
</dbReference>
<dbReference type="UCSC" id="uc003dfv.3">
    <molecule id="Q06033-1"/>
    <property type="organism name" value="human"/>
</dbReference>
<dbReference type="AGR" id="HGNC:6168"/>
<dbReference type="CTD" id="3699"/>
<dbReference type="DisGeNET" id="3699"/>
<dbReference type="GeneCards" id="ITIH3"/>
<dbReference type="HGNC" id="HGNC:6168">
    <property type="gene designation" value="ITIH3"/>
</dbReference>
<dbReference type="HPA" id="ENSG00000162267">
    <property type="expression patterns" value="Tissue enriched (liver)"/>
</dbReference>
<dbReference type="MIM" id="146650">
    <property type="type" value="gene"/>
</dbReference>
<dbReference type="neXtProt" id="NX_Q06033"/>
<dbReference type="OpenTargets" id="ENSG00000162267"/>
<dbReference type="PharmGKB" id="PA29966"/>
<dbReference type="VEuPathDB" id="HostDB:ENSG00000162267"/>
<dbReference type="eggNOG" id="ENOG502QPS2">
    <property type="taxonomic scope" value="Eukaryota"/>
</dbReference>
<dbReference type="GeneTree" id="ENSGT00940000154554"/>
<dbReference type="InParanoid" id="Q06033"/>
<dbReference type="OMA" id="EFIYWIN"/>
<dbReference type="OrthoDB" id="299997at2759"/>
<dbReference type="PAN-GO" id="Q06033">
    <property type="GO annotations" value="0 GO annotations based on evolutionary models"/>
</dbReference>
<dbReference type="PhylomeDB" id="Q06033"/>
<dbReference type="TreeFam" id="TF328982"/>
<dbReference type="PathwayCommons" id="Q06033"/>
<dbReference type="Reactome" id="R-HSA-114608">
    <property type="pathway name" value="Platelet degranulation"/>
</dbReference>
<dbReference type="SignaLink" id="Q06033"/>
<dbReference type="BioGRID-ORCS" id="3699">
    <property type="hits" value="17 hits in 1143 CRISPR screens"/>
</dbReference>
<dbReference type="ChiTaRS" id="ITIH3">
    <property type="organism name" value="human"/>
</dbReference>
<dbReference type="GeneWiki" id="ITIH3"/>
<dbReference type="GenomeRNAi" id="3699"/>
<dbReference type="Pharos" id="Q06033">
    <property type="development level" value="Tbio"/>
</dbReference>
<dbReference type="PRO" id="PR:Q06033"/>
<dbReference type="Proteomes" id="UP000005640">
    <property type="component" value="Chromosome 3"/>
</dbReference>
<dbReference type="RNAct" id="Q06033">
    <property type="molecule type" value="protein"/>
</dbReference>
<dbReference type="Bgee" id="ENSG00000162267">
    <property type="expression patterns" value="Expressed in right lobe of liver and 109 other cell types or tissues"/>
</dbReference>
<dbReference type="ExpressionAtlas" id="Q06033">
    <property type="expression patterns" value="baseline and differential"/>
</dbReference>
<dbReference type="GO" id="GO:0070062">
    <property type="term" value="C:extracellular exosome"/>
    <property type="evidence" value="ECO:0007005"/>
    <property type="project" value="UniProtKB"/>
</dbReference>
<dbReference type="GO" id="GO:0005576">
    <property type="term" value="C:extracellular region"/>
    <property type="evidence" value="ECO:0000304"/>
    <property type="project" value="Reactome"/>
</dbReference>
<dbReference type="GO" id="GO:0031089">
    <property type="term" value="C:platelet dense granule lumen"/>
    <property type="evidence" value="ECO:0000304"/>
    <property type="project" value="Reactome"/>
</dbReference>
<dbReference type="GO" id="GO:0004866">
    <property type="term" value="F:endopeptidase inhibitor activity"/>
    <property type="evidence" value="ECO:0000304"/>
    <property type="project" value="ProtInc"/>
</dbReference>
<dbReference type="GO" id="GO:0004867">
    <property type="term" value="F:serine-type endopeptidase inhibitor activity"/>
    <property type="evidence" value="ECO:0007669"/>
    <property type="project" value="UniProtKB-KW"/>
</dbReference>
<dbReference type="GO" id="GO:0030212">
    <property type="term" value="P:hyaluronan metabolic process"/>
    <property type="evidence" value="ECO:0007669"/>
    <property type="project" value="InterPro"/>
</dbReference>
<dbReference type="CDD" id="cd01461">
    <property type="entry name" value="vWA_interalpha_trypsin_inhibitor"/>
    <property type="match status" value="1"/>
</dbReference>
<dbReference type="FunFam" id="3.40.50.410:FF:000013">
    <property type="entry name" value="inter-alpha-trypsin inhibitor heavy chain H2"/>
    <property type="match status" value="1"/>
</dbReference>
<dbReference type="Gene3D" id="3.40.50.410">
    <property type="entry name" value="von Willebrand factor, type A domain"/>
    <property type="match status" value="1"/>
</dbReference>
<dbReference type="InterPro" id="IPR010600">
    <property type="entry name" value="ITI_HC_C"/>
</dbReference>
<dbReference type="InterPro" id="IPR050934">
    <property type="entry name" value="ITIH"/>
</dbReference>
<dbReference type="InterPro" id="IPR013694">
    <property type="entry name" value="VIT"/>
</dbReference>
<dbReference type="InterPro" id="IPR002035">
    <property type="entry name" value="VWF_A"/>
</dbReference>
<dbReference type="InterPro" id="IPR036465">
    <property type="entry name" value="vWFA_dom_sf"/>
</dbReference>
<dbReference type="PANTHER" id="PTHR10338">
    <property type="entry name" value="INTER-ALPHA-TRYPSIN INHIBITOR HEAVY CHAIN FAMILY MEMBER"/>
    <property type="match status" value="1"/>
</dbReference>
<dbReference type="PANTHER" id="PTHR10338:SF115">
    <property type="entry name" value="INTER-ALPHA-TRYPSIN INHIBITOR HEAVY CHAIN H3"/>
    <property type="match status" value="1"/>
</dbReference>
<dbReference type="Pfam" id="PF06668">
    <property type="entry name" value="ITI_HC_C"/>
    <property type="match status" value="1"/>
</dbReference>
<dbReference type="Pfam" id="PF08487">
    <property type="entry name" value="VIT"/>
    <property type="match status" value="1"/>
</dbReference>
<dbReference type="Pfam" id="PF00092">
    <property type="entry name" value="VWA"/>
    <property type="match status" value="1"/>
</dbReference>
<dbReference type="SMART" id="SM00609">
    <property type="entry name" value="VIT"/>
    <property type="match status" value="1"/>
</dbReference>
<dbReference type="SMART" id="SM00327">
    <property type="entry name" value="VWA"/>
    <property type="match status" value="1"/>
</dbReference>
<dbReference type="SUPFAM" id="SSF53300">
    <property type="entry name" value="vWA-like"/>
    <property type="match status" value="1"/>
</dbReference>
<dbReference type="PROSITE" id="PS51468">
    <property type="entry name" value="VIT"/>
    <property type="match status" value="1"/>
</dbReference>
<dbReference type="PROSITE" id="PS50234">
    <property type="entry name" value="VWFA"/>
    <property type="match status" value="1"/>
</dbReference>
<gene>
    <name type="primary">ITIH3</name>
</gene>
<reference key="1">
    <citation type="journal article" date="1993" name="Eur. J. Biochem.">
        <title>Human pre-alpha-trypsin inhibitor-precursor heavy chain. cDNA and deduced amino-acid sequence.</title>
        <authorList>
            <person name="Bourguignon J."/>
            <person name="Diarra-Mehrpour M."/>
            <person name="Thiberville L."/>
            <person name="Bost F."/>
            <person name="Sesboue R."/>
            <person name="Martin J.-P."/>
        </authorList>
    </citation>
    <scope>NUCLEOTIDE SEQUENCE [MRNA] (ISOFORM 2)</scope>
    <scope>VARIANT LYS-315</scope>
    <source>
        <tissue>Liver</tissue>
    </source>
</reference>
<reference key="2">
    <citation type="journal article" date="1998" name="J. Biol. Chem.">
        <title>Human inter-alpha-trypsin inhibitor heavy chain H3 gene. Genomic organization, promoter analysis, and gene linkage.</title>
        <authorList>
            <person name="Diarra-Mehrpour M."/>
            <person name="Sarafan N."/>
            <person name="Bourguignon J."/>
            <person name="Bonnet F."/>
            <person name="Bost F."/>
            <person name="Martin J.-P."/>
        </authorList>
    </citation>
    <scope>NUCLEOTIDE SEQUENCE [GENOMIC DNA]</scope>
    <source>
        <tissue>Blood</tissue>
    </source>
</reference>
<reference key="3">
    <citation type="submission" date="2005-04" db="EMBL/GenBank/DDBJ databases">
        <authorList>
            <person name="Suzuki Y."/>
            <person name="Sugano S."/>
            <person name="Totoki Y."/>
            <person name="Toyoda A."/>
            <person name="Takeda T."/>
            <person name="Sakaki Y."/>
            <person name="Tanaka A."/>
            <person name="Yokoyama S."/>
        </authorList>
    </citation>
    <scope>NUCLEOTIDE SEQUENCE [LARGE SCALE MRNA] (ISOFORM 1)</scope>
    <source>
        <tissue>Liver</tissue>
    </source>
</reference>
<reference key="4">
    <citation type="journal article" date="2006" name="Nature">
        <title>The DNA sequence, annotation and analysis of human chromosome 3.</title>
        <authorList>
            <person name="Muzny D.M."/>
            <person name="Scherer S.E."/>
            <person name="Kaul R."/>
            <person name="Wang J."/>
            <person name="Yu J."/>
            <person name="Sudbrak R."/>
            <person name="Buhay C.J."/>
            <person name="Chen R."/>
            <person name="Cree A."/>
            <person name="Ding Y."/>
            <person name="Dugan-Rocha S."/>
            <person name="Gill R."/>
            <person name="Gunaratne P."/>
            <person name="Harris R.A."/>
            <person name="Hawes A.C."/>
            <person name="Hernandez J."/>
            <person name="Hodgson A.V."/>
            <person name="Hume J."/>
            <person name="Jackson A."/>
            <person name="Khan Z.M."/>
            <person name="Kovar-Smith C."/>
            <person name="Lewis L.R."/>
            <person name="Lozado R.J."/>
            <person name="Metzker M.L."/>
            <person name="Milosavljevic A."/>
            <person name="Miner G.R."/>
            <person name="Morgan M.B."/>
            <person name="Nazareth L.V."/>
            <person name="Scott G."/>
            <person name="Sodergren E."/>
            <person name="Song X.-Z."/>
            <person name="Steffen D."/>
            <person name="Wei S."/>
            <person name="Wheeler D.A."/>
            <person name="Wright M.W."/>
            <person name="Worley K.C."/>
            <person name="Yuan Y."/>
            <person name="Zhang Z."/>
            <person name="Adams C.Q."/>
            <person name="Ansari-Lari M.A."/>
            <person name="Ayele M."/>
            <person name="Brown M.J."/>
            <person name="Chen G."/>
            <person name="Chen Z."/>
            <person name="Clendenning J."/>
            <person name="Clerc-Blankenburg K.P."/>
            <person name="Chen R."/>
            <person name="Chen Z."/>
            <person name="Davis C."/>
            <person name="Delgado O."/>
            <person name="Dinh H.H."/>
            <person name="Dong W."/>
            <person name="Draper H."/>
            <person name="Ernst S."/>
            <person name="Fu G."/>
            <person name="Gonzalez-Garay M.L."/>
            <person name="Garcia D.K."/>
            <person name="Gillett W."/>
            <person name="Gu J."/>
            <person name="Hao B."/>
            <person name="Haugen E."/>
            <person name="Havlak P."/>
            <person name="He X."/>
            <person name="Hennig S."/>
            <person name="Hu S."/>
            <person name="Huang W."/>
            <person name="Jackson L.R."/>
            <person name="Jacob L.S."/>
            <person name="Kelly S.H."/>
            <person name="Kube M."/>
            <person name="Levy R."/>
            <person name="Li Z."/>
            <person name="Liu B."/>
            <person name="Liu J."/>
            <person name="Liu W."/>
            <person name="Lu J."/>
            <person name="Maheshwari M."/>
            <person name="Nguyen B.-V."/>
            <person name="Okwuonu G.O."/>
            <person name="Palmeiri A."/>
            <person name="Pasternak S."/>
            <person name="Perez L.M."/>
            <person name="Phelps K.A."/>
            <person name="Plopper F.J."/>
            <person name="Qiang B."/>
            <person name="Raymond C."/>
            <person name="Rodriguez R."/>
            <person name="Saenphimmachak C."/>
            <person name="Santibanez J."/>
            <person name="Shen H."/>
            <person name="Shen Y."/>
            <person name="Subramanian S."/>
            <person name="Tabor P.E."/>
            <person name="Verduzco D."/>
            <person name="Waldron L."/>
            <person name="Wang J."/>
            <person name="Wang J."/>
            <person name="Wang Q."/>
            <person name="Williams G.A."/>
            <person name="Wong G.K.-S."/>
            <person name="Yao Z."/>
            <person name="Zhang J."/>
            <person name="Zhang X."/>
            <person name="Zhao G."/>
            <person name="Zhou J."/>
            <person name="Zhou Y."/>
            <person name="Nelson D."/>
            <person name="Lehrach H."/>
            <person name="Reinhardt R."/>
            <person name="Naylor S.L."/>
            <person name="Yang H."/>
            <person name="Olson M."/>
            <person name="Weinstock G."/>
            <person name="Gibbs R.A."/>
        </authorList>
    </citation>
    <scope>NUCLEOTIDE SEQUENCE [LARGE SCALE GENOMIC DNA]</scope>
</reference>
<reference key="5">
    <citation type="journal article" date="2004" name="Genome Res.">
        <title>The status, quality, and expansion of the NIH full-length cDNA project: the Mammalian Gene Collection (MGC).</title>
        <authorList>
            <consortium name="The MGC Project Team"/>
        </authorList>
    </citation>
    <scope>NUCLEOTIDE SEQUENCE [LARGE SCALE MRNA] (ISOFORM 1)</scope>
</reference>
<reference key="6">
    <citation type="journal article" date="1994" name="Biochim. Biophys. Acta">
        <title>Tandem orientation of the inter-alpha-trypsin inhibitor heavy chain H1 and H3 genes.</title>
        <authorList>
            <person name="Diarra-Mehrpour M."/>
            <person name="Bourguignon J."/>
            <person name="Sarafan N."/>
            <person name="Bost F."/>
            <person name="Sesbouee R."/>
            <person name="Muschio-Bonnet F."/>
            <person name="Martin J.-P."/>
        </authorList>
    </citation>
    <scope>NUCLEOTIDE SEQUENCE [MRNA] OF 1-27 (ISOFORM 2)</scope>
</reference>
<reference key="7">
    <citation type="journal article" date="1989" name="J. Biol. Chem.">
        <title>Analysis of inter-alpha-trypsin inhibitor and a novel trypsin inhibitor, pre-alpha-trypsin inhibitor, from human plasma. Polypeptide chain stoichiometry and assembly by glycan.</title>
        <authorList>
            <person name="Enghild J.J."/>
            <person name="Thoegersen I.B."/>
            <person name="Pizzo S.V."/>
            <person name="Salvesen G."/>
        </authorList>
    </citation>
    <scope>PROTEIN SEQUENCE OF 34-53; 467-481 AND 501-519</scope>
    <scope>IDENTIFICATION IN PRE-ALPHA-INHIBITOR COMPLEX</scope>
    <scope>IDENTIFICATION BY MASS SPECTROMETRY</scope>
</reference>
<reference key="8">
    <citation type="journal article" date="1989" name="Eur. J. Biochem.">
        <title>Human plasma inter-alpha-trypsin inhibitor is encoded by four genes on three chromosomes.</title>
        <authorList>
            <person name="Diarra-Mehrpour M."/>
            <person name="Bourguignon J."/>
            <person name="Sesboue R."/>
            <person name="Mattei M.-G."/>
            <person name="Passage E."/>
            <person name="Salier J.-P."/>
            <person name="Martin J.-P."/>
        </authorList>
    </citation>
    <scope>NUCLEOTIDE SEQUENCE [MRNA] OF 345-890 (ISOFORMS 1/2)</scope>
    <source>
        <tissue>Liver</tissue>
    </source>
</reference>
<reference key="9">
    <citation type="journal article" date="1991" name="J. Biol. Chem.">
        <title>Chondroitin 4-sulfate covalently cross-links the chains of the human blood protein pre-alpha-inhibitor.</title>
        <authorList>
            <person name="Enghild J.J."/>
            <person name="Salvesen G."/>
            <person name="Hefta S.A."/>
            <person name="Thoegersen I.B."/>
            <person name="Rutherfurd S."/>
            <person name="Pizzo S.V."/>
        </authorList>
    </citation>
    <scope>PROTEIN SEQUENCE OF 635-651</scope>
    <scope>CROSS-LINK SITE TO BIKUNIN</scope>
</reference>
<reference key="10">
    <citation type="journal article" date="2005" name="J. Proteome Res.">
        <title>Human plasma N-glycoproteome analysis by immunoaffinity subtraction, hydrazide chemistry, and mass spectrometry.</title>
        <authorList>
            <person name="Liu T."/>
            <person name="Qian W.-J."/>
            <person name="Gritsenko M.A."/>
            <person name="Camp D.G. II"/>
            <person name="Monroe M.E."/>
            <person name="Moore R.J."/>
            <person name="Smith R.D."/>
        </authorList>
    </citation>
    <scope>GLYCOSYLATION [LARGE SCALE ANALYSIS] AT ASN-91 AND ASN-580</scope>
    <source>
        <tissue>Plasma</tissue>
    </source>
</reference>
<name>ITIH3_HUMAN</name>
<sequence length="890" mass="99849">MAFAWWPCLILALLSSLAASGFPRSPFRLLGKRSLPEGVANGIEVYSTKINSKVTSRFAHNVVTMRAVNRADTAKEVSFDVELPKTAFITNFTLTIDGVTYPGNVKEKEVAKKQYEKAVSQGKTAGLVKASGRKLEKFTVSVNVAAGSKVTFELTYEELLKRHKGKYEMYLKVQPKQLVKHFEIEVDIFEPQGISMLDAEASFITNDLLGSALTKSFSGKKGHVSFKPSLDQQRSCPTCTDSLLNGDFTITYDVNRESPGNVQIVNGYFVHFFAPQGLPVVPKNVAFVIDISGSMAGRKLEQTKEALLRILEDMQEEDYLNFILFSGDVSTWKEHLVQATPENLQEARTFVKSMEDKGMTNINDGLLRGISMLNKAREEHRIPERSTSIVIMLTDGDANVGESRPEKIQENVRNAIGGKFPLYNLGFGNNLNYNFLENMALENHGFARRIYEDSDADLQLQGFYEEVANPLLTGVEMEYPENAILDLTQNTYQHFYDGSEIVVAGRLVDEDMNSFKADVKGHGATNDLTFTEEVDMKEMEKALQERDYIFGNYIERLWAYLTIEQLLEKRKNAHGEEKENLTARALDLSLKYHFVTPLTSMVVTKPEDNEDERAIADKPGEDAEATPVSPAMSYLTSYQPPQNPYYYVDGDPHFIIQIPEKDDALCFNIDEAPGTVLRLIQDAVTGLTVNGQITGDKRGSPDSKTRKTYFGKLGIANAQMDFQVEVTTEKITLWNRAVPSTFSWLDTVTVTQDGLSMMINRKNMVVSFGDGVTFVVVLHQVWKKHPVHRDFLGFYVVDSHRMSAQTHGLLGQFFQPFDFKVSDIRPGSDPTKPDATLVVKNHQLIVTRGSQKDYRKDASIGTKVVCWFVHNNGEGLIDGVHTDYIVPNLF</sequence>
<proteinExistence type="evidence at protein level"/>
<evidence type="ECO:0000255" key="1"/>
<evidence type="ECO:0000255" key="2">
    <source>
        <dbReference type="PROSITE-ProRule" id="PRU00219"/>
    </source>
</evidence>
<evidence type="ECO:0000255" key="3">
    <source>
        <dbReference type="PROSITE-ProRule" id="PRU00801"/>
    </source>
</evidence>
<evidence type="ECO:0000269" key="4">
    <source>
    </source>
</evidence>
<evidence type="ECO:0000269" key="5">
    <source>
    </source>
</evidence>
<evidence type="ECO:0000269" key="6">
    <source>
    </source>
</evidence>
<evidence type="ECO:0000303" key="7">
    <source>
    </source>
</evidence>
<evidence type="ECO:0000303" key="8">
    <source>
    </source>
</evidence>
<evidence type="ECO:0000305" key="9"/>
<keyword id="KW-0025">Alternative splicing</keyword>
<keyword id="KW-0903">Direct protein sequencing</keyword>
<keyword id="KW-0325">Glycoprotein</keyword>
<keyword id="KW-0646">Protease inhibitor</keyword>
<keyword id="KW-0654">Proteoglycan</keyword>
<keyword id="KW-1267">Proteomics identification</keyword>
<keyword id="KW-1185">Reference proteome</keyword>
<keyword id="KW-0964">Secreted</keyword>
<keyword id="KW-0722">Serine protease inhibitor</keyword>
<keyword id="KW-0732">Signal</keyword>
<protein>
    <recommendedName>
        <fullName>Inter-alpha-trypsin inhibitor heavy chain H3</fullName>
        <shortName>ITI heavy chain H3</shortName>
        <shortName>ITI-HC3</shortName>
        <shortName>Inter-alpha-inhibitor heavy chain 3</shortName>
    </recommendedName>
    <alternativeName>
        <fullName>Serum-derived hyaluronan-associated protein</fullName>
        <shortName>SHAP</shortName>
    </alternativeName>
</protein>
<comment type="function">
    <text>May act as a carrier of hyaluronan in serum or as a binding protein between hyaluronan and other matrix protein, including those on cell surfaces in tissues to regulate the localization, synthesis and degradation of hyaluronan which are essential to cells undergoing biological processes.</text>
</comment>
<comment type="subunit">
    <text evidence="5">I-alpha-I plasma protease inhibitors are assembled from one or two heavy chains (HC) and one light chain, bikunin. Pre-alpha-inhibitor (P-alpha-I) is composed of ITIH3/HC3 and bikunin.</text>
</comment>
<comment type="subcellular location">
    <subcellularLocation>
        <location>Secreted</location>
    </subcellularLocation>
</comment>
<comment type="alternative products">
    <event type="alternative splicing"/>
    <isoform>
        <id>Q06033-1</id>
        <name>1</name>
        <sequence type="displayed"/>
    </isoform>
    <isoform>
        <id>Q06033-2</id>
        <name>2</name>
        <sequence type="described" ref="VSP_029842"/>
    </isoform>
</comment>
<comment type="PTM">
    <text>Heavy chains are linked to bikunin via chondroitin 4-sulfate esterified to the alpha-carboxyl of the C-terminal aspartate after propeptide cleavage.</text>
</comment>
<comment type="similarity">
    <text evidence="9">Belongs to the ITIH family.</text>
</comment>
<comment type="sequence caution" evidence="9">
    <conflict type="frameshift">
        <sequence resource="EMBL-CDS" id="CAA32821"/>
    </conflict>
</comment>
<comment type="sequence caution" evidence="9">
    <conflict type="frameshift">
        <sequence resource="EMBL-CDS" id="CAA47439"/>
    </conflict>
</comment>
<accession>Q06033</accession>
<accession>Q3B7H5</accession>
<accession>Q53F06</accession>
<accession>Q6LAM2</accession>
<accession>Q99085</accession>